<keyword id="KW-0067">ATP-binding</keyword>
<keyword id="KW-0963">Cytoplasm</keyword>
<keyword id="KW-0418">Kinase</keyword>
<keyword id="KW-0547">Nucleotide-binding</keyword>
<keyword id="KW-0808">Transferase</keyword>
<gene>
    <name evidence="1" type="primary">udk</name>
    <name type="ordered locus">CLD_2011</name>
</gene>
<organism>
    <name type="scientific">Clostridium botulinum (strain Okra / Type B1)</name>
    <dbReference type="NCBI Taxonomy" id="498213"/>
    <lineage>
        <taxon>Bacteria</taxon>
        <taxon>Bacillati</taxon>
        <taxon>Bacillota</taxon>
        <taxon>Clostridia</taxon>
        <taxon>Eubacteriales</taxon>
        <taxon>Clostridiaceae</taxon>
        <taxon>Clostridium</taxon>
    </lineage>
</organism>
<accession>B1IJ68</accession>
<evidence type="ECO:0000255" key="1">
    <source>
        <dbReference type="HAMAP-Rule" id="MF_00551"/>
    </source>
</evidence>
<feature type="chain" id="PRO_1000129073" description="Uridine kinase">
    <location>
        <begin position="1"/>
        <end position="206"/>
    </location>
</feature>
<feature type="binding site" evidence="1">
    <location>
        <begin position="11"/>
        <end position="18"/>
    </location>
    <ligand>
        <name>ATP</name>
        <dbReference type="ChEBI" id="CHEBI:30616"/>
    </ligand>
</feature>
<comment type="catalytic activity">
    <reaction evidence="1">
        <text>uridine + ATP = UMP + ADP + H(+)</text>
        <dbReference type="Rhea" id="RHEA:16825"/>
        <dbReference type="ChEBI" id="CHEBI:15378"/>
        <dbReference type="ChEBI" id="CHEBI:16704"/>
        <dbReference type="ChEBI" id="CHEBI:30616"/>
        <dbReference type="ChEBI" id="CHEBI:57865"/>
        <dbReference type="ChEBI" id="CHEBI:456216"/>
        <dbReference type="EC" id="2.7.1.48"/>
    </reaction>
</comment>
<comment type="catalytic activity">
    <reaction evidence="1">
        <text>cytidine + ATP = CMP + ADP + H(+)</text>
        <dbReference type="Rhea" id="RHEA:24674"/>
        <dbReference type="ChEBI" id="CHEBI:15378"/>
        <dbReference type="ChEBI" id="CHEBI:17562"/>
        <dbReference type="ChEBI" id="CHEBI:30616"/>
        <dbReference type="ChEBI" id="CHEBI:60377"/>
        <dbReference type="ChEBI" id="CHEBI:456216"/>
        <dbReference type="EC" id="2.7.1.48"/>
    </reaction>
</comment>
<comment type="pathway">
    <text evidence="1">Pyrimidine metabolism; CTP biosynthesis via salvage pathway; CTP from cytidine: step 1/3.</text>
</comment>
<comment type="pathway">
    <text evidence="1">Pyrimidine metabolism; UMP biosynthesis via salvage pathway; UMP from uridine: step 1/1.</text>
</comment>
<comment type="subcellular location">
    <subcellularLocation>
        <location evidence="1">Cytoplasm</location>
    </subcellularLocation>
</comment>
<comment type="similarity">
    <text evidence="1">Belongs to the uridine kinase family.</text>
</comment>
<proteinExistence type="inferred from homology"/>
<sequence>MKRPVLIGITGGTGSGKSTVAKEIYNKFDEACIAMIEQDSYYKDQSSIPFEERCKKNYDHPDAFDNELLINHLKNLVDLNVIEKPIYDFEAHNRKEETIKVEPRDIIIVEGILVLQDPKVRELLDIKIYVDTDADVRIIRRLLRDINERGRTVDSVINQYLTVVRPMHMQFIEPSKRYADIIIPEGGHNRVAVDMMVANIKHLLQK</sequence>
<name>URK_CLOBK</name>
<reference key="1">
    <citation type="journal article" date="2007" name="PLoS ONE">
        <title>Analysis of the neurotoxin complex genes in Clostridium botulinum A1-A4 and B1 strains: BoNT/A3, /Ba4 and /B1 clusters are located within plasmids.</title>
        <authorList>
            <person name="Smith T.J."/>
            <person name="Hill K.K."/>
            <person name="Foley B.T."/>
            <person name="Detter J.C."/>
            <person name="Munk A.C."/>
            <person name="Bruce D.C."/>
            <person name="Doggett N.A."/>
            <person name="Smith L.A."/>
            <person name="Marks J.D."/>
            <person name="Xie G."/>
            <person name="Brettin T.S."/>
        </authorList>
    </citation>
    <scope>NUCLEOTIDE SEQUENCE [LARGE SCALE GENOMIC DNA]</scope>
    <source>
        <strain>Okra / Type B1</strain>
    </source>
</reference>
<dbReference type="EC" id="2.7.1.48" evidence="1"/>
<dbReference type="EMBL" id="CP000939">
    <property type="protein sequence ID" value="ACA45777.1"/>
    <property type="molecule type" value="Genomic_DNA"/>
</dbReference>
<dbReference type="RefSeq" id="WP_015957949.1">
    <property type="nucleotide sequence ID" value="NC_010516.1"/>
</dbReference>
<dbReference type="SMR" id="B1IJ68"/>
<dbReference type="KEGG" id="cbb:CLD_2011"/>
<dbReference type="HOGENOM" id="CLU_021278_1_2_9"/>
<dbReference type="UniPathway" id="UPA00574">
    <property type="reaction ID" value="UER00637"/>
</dbReference>
<dbReference type="UniPathway" id="UPA00579">
    <property type="reaction ID" value="UER00640"/>
</dbReference>
<dbReference type="Proteomes" id="UP000008541">
    <property type="component" value="Chromosome"/>
</dbReference>
<dbReference type="GO" id="GO:0005737">
    <property type="term" value="C:cytoplasm"/>
    <property type="evidence" value="ECO:0007669"/>
    <property type="project" value="UniProtKB-SubCell"/>
</dbReference>
<dbReference type="GO" id="GO:0005524">
    <property type="term" value="F:ATP binding"/>
    <property type="evidence" value="ECO:0007669"/>
    <property type="project" value="UniProtKB-UniRule"/>
</dbReference>
<dbReference type="GO" id="GO:0043771">
    <property type="term" value="F:cytidine kinase activity"/>
    <property type="evidence" value="ECO:0007669"/>
    <property type="project" value="RHEA"/>
</dbReference>
<dbReference type="GO" id="GO:0004849">
    <property type="term" value="F:uridine kinase activity"/>
    <property type="evidence" value="ECO:0007669"/>
    <property type="project" value="UniProtKB-UniRule"/>
</dbReference>
<dbReference type="GO" id="GO:0044211">
    <property type="term" value="P:CTP salvage"/>
    <property type="evidence" value="ECO:0007669"/>
    <property type="project" value="UniProtKB-UniRule"/>
</dbReference>
<dbReference type="GO" id="GO:0044206">
    <property type="term" value="P:UMP salvage"/>
    <property type="evidence" value="ECO:0007669"/>
    <property type="project" value="UniProtKB-UniRule"/>
</dbReference>
<dbReference type="CDD" id="cd02023">
    <property type="entry name" value="UMPK"/>
    <property type="match status" value="1"/>
</dbReference>
<dbReference type="Gene3D" id="3.40.50.300">
    <property type="entry name" value="P-loop containing nucleotide triphosphate hydrolases"/>
    <property type="match status" value="1"/>
</dbReference>
<dbReference type="HAMAP" id="MF_00551">
    <property type="entry name" value="Uridine_kinase"/>
    <property type="match status" value="1"/>
</dbReference>
<dbReference type="InterPro" id="IPR027417">
    <property type="entry name" value="P-loop_NTPase"/>
</dbReference>
<dbReference type="InterPro" id="IPR006083">
    <property type="entry name" value="PRK/URK"/>
</dbReference>
<dbReference type="InterPro" id="IPR026008">
    <property type="entry name" value="Uridine_kinase"/>
</dbReference>
<dbReference type="InterPro" id="IPR000764">
    <property type="entry name" value="Uridine_kinase-like"/>
</dbReference>
<dbReference type="NCBIfam" id="NF004018">
    <property type="entry name" value="PRK05480.1"/>
    <property type="match status" value="1"/>
</dbReference>
<dbReference type="NCBIfam" id="TIGR00235">
    <property type="entry name" value="udk"/>
    <property type="match status" value="1"/>
</dbReference>
<dbReference type="PANTHER" id="PTHR10285">
    <property type="entry name" value="URIDINE KINASE"/>
    <property type="match status" value="1"/>
</dbReference>
<dbReference type="Pfam" id="PF00485">
    <property type="entry name" value="PRK"/>
    <property type="match status" value="1"/>
</dbReference>
<dbReference type="PRINTS" id="PR00988">
    <property type="entry name" value="URIDINKINASE"/>
</dbReference>
<dbReference type="SUPFAM" id="SSF52540">
    <property type="entry name" value="P-loop containing nucleoside triphosphate hydrolases"/>
    <property type="match status" value="1"/>
</dbReference>
<protein>
    <recommendedName>
        <fullName evidence="1">Uridine kinase</fullName>
        <ecNumber evidence="1">2.7.1.48</ecNumber>
    </recommendedName>
    <alternativeName>
        <fullName evidence="1">Cytidine monophosphokinase</fullName>
    </alternativeName>
    <alternativeName>
        <fullName evidence="1">Uridine monophosphokinase</fullName>
    </alternativeName>
</protein>